<organism>
    <name type="scientific">Streptococcus thermophilus</name>
    <dbReference type="NCBI Taxonomy" id="1308"/>
    <lineage>
        <taxon>Bacteria</taxon>
        <taxon>Bacillati</taxon>
        <taxon>Bacillota</taxon>
        <taxon>Bacilli</taxon>
        <taxon>Lactobacillales</taxon>
        <taxon>Streptococcaceae</taxon>
        <taxon>Streptococcus</taxon>
    </lineage>
</organism>
<proteinExistence type="evidence at protein level"/>
<keyword id="KW-0002">3D-structure</keyword>
<keyword id="KW-0051">Antiviral defense</keyword>
<keyword id="KW-0067">ATP-binding</keyword>
<keyword id="KW-0255">Endonuclease</keyword>
<keyword id="KW-0269">Exonuclease</keyword>
<keyword id="KW-0378">Hydrolase</keyword>
<keyword id="KW-0540">Nuclease</keyword>
<keyword id="KW-0547">Nucleotide-binding</keyword>
<keyword id="KW-0694">RNA-binding</keyword>
<keyword id="KW-0808">Transferase</keyword>
<accession>A0A0A7HFE1</accession>
<dbReference type="EC" id="3.1.-.-" evidence="4"/>
<dbReference type="EC" id="2.7.7.-" evidence="5"/>
<dbReference type="EMBL" id="KM222358">
    <property type="protein sequence ID" value="AIZ03604.1"/>
    <property type="molecule type" value="Genomic_DNA"/>
</dbReference>
<dbReference type="RefSeq" id="WP_014621547.1">
    <property type="nucleotide sequence ID" value="NZ_RIIY01000107.1"/>
</dbReference>
<dbReference type="PDB" id="6NUD">
    <property type="method" value="EM"/>
    <property type="resolution" value="3.50 A"/>
    <property type="chains" value="J=1-758"/>
</dbReference>
<dbReference type="PDB" id="6NUE">
    <property type="method" value="EM"/>
    <property type="resolution" value="3.30 A"/>
    <property type="chains" value="J=1-758"/>
</dbReference>
<dbReference type="PDBsum" id="6NUD"/>
<dbReference type="PDBsum" id="6NUE"/>
<dbReference type="EMDB" id="EMD-0516"/>
<dbReference type="EMDB" id="EMD-0519"/>
<dbReference type="SMR" id="A0A0A7HFE1"/>
<dbReference type="GO" id="GO:0005524">
    <property type="term" value="F:ATP binding"/>
    <property type="evidence" value="ECO:0007669"/>
    <property type="project" value="UniProtKB-KW"/>
</dbReference>
<dbReference type="GO" id="GO:0004519">
    <property type="term" value="F:endonuclease activity"/>
    <property type="evidence" value="ECO:0007669"/>
    <property type="project" value="UniProtKB-KW"/>
</dbReference>
<dbReference type="GO" id="GO:0004527">
    <property type="term" value="F:exonuclease activity"/>
    <property type="evidence" value="ECO:0007669"/>
    <property type="project" value="UniProtKB-KW"/>
</dbReference>
<dbReference type="GO" id="GO:0003723">
    <property type="term" value="F:RNA binding"/>
    <property type="evidence" value="ECO:0007669"/>
    <property type="project" value="UniProtKB-KW"/>
</dbReference>
<dbReference type="GO" id="GO:0016740">
    <property type="term" value="F:transferase activity"/>
    <property type="evidence" value="ECO:0007669"/>
    <property type="project" value="UniProtKB-KW"/>
</dbReference>
<dbReference type="GO" id="GO:0051607">
    <property type="term" value="P:defense response to virus"/>
    <property type="evidence" value="ECO:0007669"/>
    <property type="project" value="UniProtKB-KW"/>
</dbReference>
<dbReference type="CDD" id="cd09680">
    <property type="entry name" value="Cas10_III"/>
    <property type="match status" value="1"/>
</dbReference>
<dbReference type="Gene3D" id="3.30.70.270">
    <property type="match status" value="1"/>
</dbReference>
<dbReference type="Gene3D" id="1.10.3210.10">
    <property type="entry name" value="Hypothetical protein af1432"/>
    <property type="match status" value="1"/>
</dbReference>
<dbReference type="InterPro" id="IPR054767">
    <property type="entry name" value="Cas10-Cmr2_palm2"/>
</dbReference>
<dbReference type="InterPro" id="IPR013408">
    <property type="entry name" value="Cas10/Csm1"/>
</dbReference>
<dbReference type="InterPro" id="IPR052117">
    <property type="entry name" value="Cas10/Csm1_subtype-III-A"/>
</dbReference>
<dbReference type="InterPro" id="IPR048693">
    <property type="entry name" value="Cmr2-like_C"/>
</dbReference>
<dbReference type="InterPro" id="IPR041062">
    <property type="entry name" value="Csm1_B"/>
</dbReference>
<dbReference type="InterPro" id="IPR000160">
    <property type="entry name" value="GGDEF_dom"/>
</dbReference>
<dbReference type="InterPro" id="IPR006674">
    <property type="entry name" value="HD_domain"/>
</dbReference>
<dbReference type="InterPro" id="IPR043128">
    <property type="entry name" value="Rev_trsase/Diguanyl_cyclase"/>
</dbReference>
<dbReference type="NCBIfam" id="TIGR02578">
    <property type="entry name" value="cas_TM1811_Csm1"/>
    <property type="match status" value="1"/>
</dbReference>
<dbReference type="PANTHER" id="PTHR36528">
    <property type="entry name" value="CRISPR SYSTEM SINGLE-STRAND-SPECIFIC DEOXYRIBONUCLEASE CAS10/CSM1 (SUBTYPE III-A)"/>
    <property type="match status" value="1"/>
</dbReference>
<dbReference type="PANTHER" id="PTHR36528:SF1">
    <property type="entry name" value="CRISPR SYSTEM SINGLE-STRAND-SPECIFIC DEOXYRIBONUCLEASE CAS10_CSM1 (SUBTYPE III-A)"/>
    <property type="match status" value="1"/>
</dbReference>
<dbReference type="Pfam" id="PF22335">
    <property type="entry name" value="Cas10-Cmr2_palm2"/>
    <property type="match status" value="1"/>
</dbReference>
<dbReference type="Pfam" id="PF20824">
    <property type="entry name" value="Cmr2_hel_dom2"/>
    <property type="match status" value="1"/>
</dbReference>
<dbReference type="Pfam" id="PF18211">
    <property type="entry name" value="Csm1_B"/>
    <property type="match status" value="1"/>
</dbReference>
<dbReference type="Pfam" id="PF01966">
    <property type="entry name" value="HD"/>
    <property type="match status" value="1"/>
</dbReference>
<dbReference type="SUPFAM" id="SSF109604">
    <property type="entry name" value="HD-domain/PDEase-like"/>
    <property type="match status" value="1"/>
</dbReference>
<dbReference type="PROSITE" id="PS50887">
    <property type="entry name" value="GGDEF"/>
    <property type="match status" value="1"/>
</dbReference>
<comment type="function">
    <text evidence="3">CRISPR (clustered regularly interspaced short palindromic repeat) is an adaptive immune system that provides protection against mobile genetic elements (viruses, transposable elements and conjugative plasmids). CRISPR clusters contain spacers, sequences complementary to antecedent mobile elements, and target invading nucleic acids. CRISPR clusters are transcribed and processed into CRISPR RNA (crRNA). The type III-A Csm effector complex binds crRNA and acts as a crRNA-guided RNase, DNase and cyclic oligoadenylate synthase; binding of target RNA cognate to the crRNA is required for all activities. In a heterologous host this Csm effector complex restricts ssRNA phage MS2, suggesting it may target RNA viruses in vivo.</text>
</comment>
<comment type="function">
    <text evidence="4">Csm functions as a non-specific ssDNase. Base-pairing between crRNA and target RNA to form a ternary Csm complex activates a ssDNase activity; target RNA cleavage suppresses the ssDNase, a temporal control that prevents uncontrolled DNA degradation. Viral RNA transcripts probably tether the Csm complex to the viral genome, recruiting Cas10 ssDNA activity which is able to degrade DNA in the transcription bubble, spatially controlling the DNase activity.</text>
</comment>
<comment type="function">
    <text evidence="4">This subunit has a weak ssDNase activity that is dramatically activated by the ternary Csm effector complex (the crRNA, Cas proteins and a cognate target ssRNA). Target RNA and ssDNA are cleaved simultaneously, although RNase activity (of Csm3) is much faster. RNA cleavage by Csm3 is not required for ssDNase activity as Csm complex with inactive Csm3 still has ssDNase activity; however as the cleaved target RNA products dissociate away ssDNase activity decreases. Self-recognition, with subsequent repression of the ssDNase activity, occurs when the 5' handle of the crRNA bases pairs with the 3' flanking sequence of the target RNA (which would occur if the CRISPR locus were transcribed as an anti-pre-crRNA). This protein has low activity on dsDNA which is not stimulated by the Csm complex.</text>
</comment>
<comment type="function">
    <text evidence="1">This subunit is a single-strand-specific deoxyribonuclease (ssDNase) which digests both linear and circular ssDNA; it has both exo- and endonuclease activity.</text>
</comment>
<comment type="function">
    <text evidence="5">When associated with the ternary Csm effector complex (the crRNA, Cas proteins and a cognate target ssRNA) synthesizes cyclic oligoadenylates (cOA) from ATP, producing cyclic triadenylate (cA3) up to cyclic hexaadenylate (cA6), which is the active cOA. The enzyme is also able to cyclize pppA3 up to pppA6. cOAs are second messengers that induce an antiviral state important for defense against invading nucleic acids. Synthesis of cOA can occur with AMP plus ATP, 2'dATP or 3'dATP (but no other nucleotides), and requires a free 3'-OH ribose moiety.</text>
</comment>
<comment type="catalytic activity">
    <reaction evidence="5">
        <text>6 ATP = cyclic hexaadenylate + 6 diphosphate</text>
        <dbReference type="Rhea" id="RHEA:58276"/>
        <dbReference type="ChEBI" id="CHEBI:30616"/>
        <dbReference type="ChEBI" id="CHEBI:33019"/>
        <dbReference type="ChEBI" id="CHEBI:142456"/>
    </reaction>
</comment>
<comment type="cofactor">
    <cofactor evidence="4 5">
        <name>a divalent metal cation</name>
        <dbReference type="ChEBI" id="CHEBI:60240"/>
    </cofactor>
    <text evidence="4 5">Degradation of ssDNA requires Mn(2+), Co(2+) or Ni(2+); Mg(2+), Ca(2+) or Zn(2+) do not activate ssDNase activity (PubMed:27105119). Formation of cOA requires Mn(2+), Co(2+) or Zn(2+), Mg(2+) is not as efficient (PubMed:28663439).</text>
</comment>
<comment type="activity regulation">
    <text evidence="4">ssDNase activity is activated by target RNA binding to the Csm-crRNA complex and is inhibited by EDTA.</text>
</comment>
<comment type="subunit">
    <text evidence="3 4 5 9 10">Part of the Csm effector complex that includes at least Cas10(1), Csm2(3), Csm3(5), Csm4(1), Csm5(1) and mature crRNA (PubMed:25458845, PubMed:27105119, PubMed:28663439). The Csm complex is elongated and slightly twisted with a maximal length of 215 Angstroms and a diameter of 75-80 Angstroms (PubMed:25458845). It has been modeled to have a central protein filamant of Csm3 subunits along which the dsRNA helix of paired crRNA and target RNA binds. The filament is capped at one end by Cas10 and Csm4 and at the other end by Csm5; ssDNA is thought to bind to the N-terminal HD domain of Cas10 (Probable). Csm with a precursor crRNA does not include Csm5, while Cas6, the enzyme probably involved in pre-crRNA processing, is found associated with a subset of the Csm complex (PubMed:25458845).</text>
</comment>
<comment type="domain">
    <text evidence="4 5">The N-terminal HD domain has ssDNase activity (PubMed:27105119). The C-terminal GGDEF domain has the cOA synthesis activity (PubMed:28663439).</text>
</comment>
<comment type="miscellaneous">
    <text evidence="3">Encoded in a type III-A CRISPR locus.</text>
</comment>
<comment type="similarity">
    <text evidence="8">Belongs to the CRISPR-associated Cas10/Csm1 family.</text>
</comment>
<gene>
    <name evidence="6" type="primary">cas10</name>
    <name evidence="8" type="synonym">csm1</name>
</gene>
<evidence type="ECO:0000250" key="1">
    <source>
        <dbReference type="UniProtKB" id="B6YWB8"/>
    </source>
</evidence>
<evidence type="ECO:0000255" key="2">
    <source>
        <dbReference type="PROSITE-ProRule" id="PRU00095"/>
    </source>
</evidence>
<evidence type="ECO:0000269" key="3">
    <source>
    </source>
</evidence>
<evidence type="ECO:0000269" key="4">
    <source>
    </source>
</evidence>
<evidence type="ECO:0000269" key="5">
    <source>
    </source>
</evidence>
<evidence type="ECO:0000303" key="6">
    <source>
    </source>
</evidence>
<evidence type="ECO:0000303" key="7">
    <source>
    </source>
</evidence>
<evidence type="ECO:0000305" key="8"/>
<evidence type="ECO:0000305" key="9">
    <source>
    </source>
</evidence>
<evidence type="ECO:0000305" key="10">
    <source>
    </source>
</evidence>
<evidence type="ECO:0000305" key="11">
    <source>
    </source>
</evidence>
<evidence type="ECO:0007829" key="12">
    <source>
        <dbReference type="PDB" id="6NUD"/>
    </source>
</evidence>
<evidence type="ECO:0007829" key="13">
    <source>
        <dbReference type="PDB" id="6NUE"/>
    </source>
</evidence>
<protein>
    <recommendedName>
        <fullName>CRISPR system single-strand-specific deoxyribonuclease Cas10/Csm1 (subtype III-A)</fullName>
        <shortName>ssDNase Cas10</shortName>
        <ecNumber evidence="4">3.1.-.-</ecNumber>
    </recommendedName>
    <alternativeName>
        <fullName evidence="11">Cyclic oligoadenylate synthase</fullName>
        <ecNumber evidence="5">2.7.7.-</ecNumber>
    </alternativeName>
    <alternativeName>
        <fullName evidence="7">StCas10</fullName>
    </alternativeName>
</protein>
<reference key="1">
    <citation type="journal article" date="2014" name="Mol. Cell">
        <title>Programmable RNA shredding by the type III-A CRISPR-Cas system of Streptococcus thermophilus.</title>
        <authorList>
            <person name="Tamulaitis G."/>
            <person name="Kazlauskiene M."/>
            <person name="Manakova E."/>
            <person name="Venclovas C."/>
            <person name="Nwokeoji A.O."/>
            <person name="Dickman M.J."/>
            <person name="Horvath P."/>
            <person name="Siksnys V."/>
        </authorList>
    </citation>
    <scope>NUCLEOTIDE SEQUENCE [GENOMIC DNA]</scope>
    <scope>FUNCTION IN PHAGE RESISTANCE</scope>
    <scope>TARGETS SSRNA</scope>
    <scope>SUBUNIT</scope>
    <scope>ANTIVIRAL DEFENSE</scope>
    <source>
        <strain>DGCC8004</strain>
    </source>
</reference>
<reference key="2">
    <citation type="journal article" date="2016" name="Mol. Cell">
        <title>Spatiotemporal control of type III-A CRISPR-Cas immunity: coupling DNA degradation with the target RNA recognition.</title>
        <authorList>
            <person name="Kazlauskiene M."/>
            <person name="Tamulaitis G."/>
            <person name="Kostiuk G."/>
            <person name="Venclovas C."/>
            <person name="Siksnys V."/>
        </authorList>
    </citation>
    <scope>FUNCTION IN SSDNASE ACTIVITY</scope>
    <scope>COFACTOR</scope>
    <scope>ACTIVITY REGULATION</scope>
    <scope>SUBUNIT</scope>
    <scope>DOMAIN</scope>
    <scope>MUTAGENESIS OF ASP-16 AND 575-ASP-ASP-576</scope>
    <source>
        <strain>DGCC8004</strain>
    </source>
</reference>
<reference key="3">
    <citation type="journal article" date="2017" name="Science">
        <title>A cyclic oligonucleotide signaling pathway in type III CRISPR-Cas systems.</title>
        <authorList>
            <person name="Kazlauskiene M."/>
            <person name="Kostiuk G."/>
            <person name="Venclovas C."/>
            <person name="Tamulaitis G."/>
            <person name="Siksnys V."/>
        </authorList>
    </citation>
    <scope>FUNCTION IN COA FORMATION</scope>
    <scope>COFACTOR</scope>
    <scope>SUBUNIT</scope>
    <scope>DOMAIN</scope>
    <scope>MUTAGENESIS OF ASP-16 AND 575-ASP-ASP-576</scope>
    <source>
        <strain>DGCC8004</strain>
    </source>
</reference>
<name>CAS10_STRTR</name>
<feature type="chain" id="PRO_0000446112" description="CRISPR system single-strand-specific deoxyribonuclease Cas10/Csm1 (subtype III-A)">
    <location>
        <begin position="1"/>
        <end position="758"/>
    </location>
</feature>
<feature type="domain" description="GGDEF" evidence="2 10">
    <location>
        <begin position="509"/>
        <end position="647"/>
    </location>
</feature>
<feature type="region of interest" description="HD domain" evidence="10">
    <location>
        <begin position="1"/>
        <end position="82"/>
    </location>
</feature>
<feature type="mutagenesis site" description="Dramatically decreased ssDNase activity. Wild-type synthesis of cOA." evidence="4 5">
    <original>D</original>
    <variation>A</variation>
    <location>
        <position position="16"/>
    </location>
</feature>
<feature type="mutagenesis site" description="Wild-type ssDNase activity. No synthesis of cOA." evidence="4 5">
    <original>DD</original>
    <variation>AA</variation>
    <location>
        <begin position="575"/>
        <end position="576"/>
    </location>
</feature>
<feature type="helix" evidence="13">
    <location>
        <begin position="6"/>
        <end position="13"/>
    </location>
</feature>
<feature type="turn" evidence="13">
    <location>
        <begin position="15"/>
        <end position="17"/>
    </location>
</feature>
<feature type="helix" evidence="13">
    <location>
        <begin position="18"/>
        <end position="24"/>
    </location>
</feature>
<feature type="helix" evidence="13">
    <location>
        <begin position="31"/>
        <end position="42"/>
    </location>
</feature>
<feature type="helix" evidence="13">
    <location>
        <begin position="47"/>
        <end position="53"/>
    </location>
</feature>
<feature type="strand" evidence="13">
    <location>
        <begin position="55"/>
        <end position="58"/>
    </location>
</feature>
<feature type="helix" evidence="13">
    <location>
        <begin position="73"/>
        <end position="80"/>
    </location>
</feature>
<feature type="strand" evidence="12">
    <location>
        <begin position="106"/>
        <end position="108"/>
    </location>
</feature>
<feature type="helix" evidence="13">
    <location>
        <begin position="111"/>
        <end position="113"/>
    </location>
</feature>
<feature type="strand" evidence="13">
    <location>
        <begin position="114"/>
        <end position="116"/>
    </location>
</feature>
<feature type="strand" evidence="13">
    <location>
        <begin position="130"/>
        <end position="132"/>
    </location>
</feature>
<feature type="strand" evidence="12">
    <location>
        <begin position="138"/>
        <end position="141"/>
    </location>
</feature>
<feature type="helix" evidence="13">
    <location>
        <begin position="153"/>
        <end position="158"/>
    </location>
</feature>
<feature type="helix" evidence="13">
    <location>
        <begin position="174"/>
        <end position="177"/>
    </location>
</feature>
<feature type="turn" evidence="13">
    <location>
        <begin position="178"/>
        <end position="180"/>
    </location>
</feature>
<feature type="helix" evidence="13">
    <location>
        <begin position="181"/>
        <end position="183"/>
    </location>
</feature>
<feature type="strand" evidence="13">
    <location>
        <begin position="185"/>
        <end position="187"/>
    </location>
</feature>
<feature type="turn" evidence="13">
    <location>
        <begin position="190"/>
        <end position="192"/>
    </location>
</feature>
<feature type="strand" evidence="13">
    <location>
        <begin position="193"/>
        <end position="197"/>
    </location>
</feature>
<feature type="helix" evidence="13">
    <location>
        <begin position="198"/>
        <end position="218"/>
    </location>
</feature>
<feature type="strand" evidence="13">
    <location>
        <begin position="225"/>
        <end position="227"/>
    </location>
</feature>
<feature type="turn" evidence="13">
    <location>
        <begin position="235"/>
        <end position="237"/>
    </location>
</feature>
<feature type="strand" evidence="13">
    <location>
        <begin position="241"/>
        <end position="247"/>
    </location>
</feature>
<feature type="turn" evidence="13">
    <location>
        <begin position="252"/>
        <end position="256"/>
    </location>
</feature>
<feature type="helix" evidence="13">
    <location>
        <begin position="261"/>
        <end position="266"/>
    </location>
</feature>
<feature type="helix" evidence="13">
    <location>
        <begin position="267"/>
        <end position="289"/>
    </location>
</feature>
<feature type="helix" evidence="12">
    <location>
        <begin position="293"/>
        <end position="295"/>
    </location>
</feature>
<feature type="strand" evidence="13">
    <location>
        <begin position="306"/>
        <end position="308"/>
    </location>
</feature>
<feature type="helix" evidence="13">
    <location>
        <begin position="312"/>
        <end position="325"/>
    </location>
</feature>
<feature type="helix" evidence="13">
    <location>
        <begin position="328"/>
        <end position="331"/>
    </location>
</feature>
<feature type="strand" evidence="13">
    <location>
        <begin position="341"/>
        <end position="346"/>
    </location>
</feature>
<feature type="helix" evidence="13">
    <location>
        <begin position="348"/>
        <end position="350"/>
    </location>
</feature>
<feature type="strand" evidence="13">
    <location>
        <begin position="351"/>
        <end position="354"/>
    </location>
</feature>
<feature type="helix" evidence="13">
    <location>
        <begin position="358"/>
        <end position="375"/>
    </location>
</feature>
<feature type="strand" evidence="13">
    <location>
        <begin position="376"/>
        <end position="378"/>
    </location>
</feature>
<feature type="turn" evidence="13">
    <location>
        <begin position="382"/>
        <end position="384"/>
    </location>
</feature>
<feature type="helix" evidence="13">
    <location>
        <begin position="385"/>
        <end position="388"/>
    </location>
</feature>
<feature type="strand" evidence="13">
    <location>
        <begin position="400"/>
        <end position="403"/>
    </location>
</feature>
<feature type="strand" evidence="13">
    <location>
        <begin position="412"/>
        <end position="416"/>
    </location>
</feature>
<feature type="turn" evidence="13">
    <location>
        <begin position="419"/>
        <end position="421"/>
    </location>
</feature>
<feature type="helix" evidence="13">
    <location>
        <begin position="422"/>
        <end position="427"/>
    </location>
</feature>
<feature type="turn" evidence="13">
    <location>
        <begin position="428"/>
        <end position="431"/>
    </location>
</feature>
<feature type="strand" evidence="12">
    <location>
        <begin position="433"/>
        <end position="436"/>
    </location>
</feature>
<feature type="strand" evidence="13">
    <location>
        <begin position="439"/>
        <end position="443"/>
    </location>
</feature>
<feature type="strand" evidence="13">
    <location>
        <begin position="446"/>
        <end position="448"/>
    </location>
</feature>
<feature type="strand" evidence="12">
    <location>
        <begin position="452"/>
        <end position="456"/>
    </location>
</feature>
<feature type="strand" evidence="13">
    <location>
        <begin position="472"/>
        <end position="474"/>
    </location>
</feature>
<feature type="helix" evidence="13">
    <location>
        <begin position="496"/>
        <end position="499"/>
    </location>
</feature>
<feature type="strand" evidence="13">
    <location>
        <begin position="503"/>
        <end position="505"/>
    </location>
</feature>
<feature type="strand" evidence="13">
    <location>
        <begin position="511"/>
        <end position="514"/>
    </location>
</feature>
<feature type="turn" evidence="13">
    <location>
        <begin position="523"/>
        <end position="525"/>
    </location>
</feature>
<feature type="strand" evidence="13">
    <location>
        <begin position="533"/>
        <end position="535"/>
    </location>
</feature>
<feature type="helix" evidence="13">
    <location>
        <begin position="540"/>
        <end position="554"/>
    </location>
</feature>
<feature type="helix" evidence="13">
    <location>
        <begin position="557"/>
        <end position="561"/>
    </location>
</feature>
<feature type="turn" evidence="13">
    <location>
        <begin position="562"/>
        <end position="564"/>
    </location>
</feature>
<feature type="strand" evidence="13">
    <location>
        <begin position="565"/>
        <end position="571"/>
    </location>
</feature>
<feature type="strand" evidence="13">
    <location>
        <begin position="574"/>
        <end position="576"/>
    </location>
</feature>
<feature type="strand" evidence="13">
    <location>
        <begin position="578"/>
        <end position="581"/>
    </location>
</feature>
<feature type="helix" evidence="13">
    <location>
        <begin position="583"/>
        <end position="601"/>
    </location>
</feature>
<feature type="strand" evidence="13">
    <location>
        <begin position="610"/>
        <end position="614"/>
    </location>
</feature>
<feature type="helix" evidence="13">
    <location>
        <begin position="620"/>
        <end position="633"/>
    </location>
</feature>
<feature type="helix" evidence="12">
    <location>
        <begin position="634"/>
        <end position="636"/>
    </location>
</feature>
<feature type="strand" evidence="12">
    <location>
        <begin position="637"/>
        <end position="640"/>
    </location>
</feature>
<feature type="strand" evidence="13">
    <location>
        <begin position="645"/>
        <end position="648"/>
    </location>
</feature>
<feature type="helix" evidence="13">
    <location>
        <begin position="654"/>
        <end position="657"/>
    </location>
</feature>
<feature type="helix" evidence="13">
    <location>
        <begin position="660"/>
        <end position="663"/>
    </location>
</feature>
<feature type="helix" evidence="13">
    <location>
        <begin position="665"/>
        <end position="671"/>
    </location>
</feature>
<feature type="helix" evidence="12">
    <location>
        <begin position="673"/>
        <end position="675"/>
    </location>
</feature>
<feature type="turn" evidence="13">
    <location>
        <begin position="677"/>
        <end position="680"/>
    </location>
</feature>
<feature type="helix" evidence="13">
    <location>
        <begin position="683"/>
        <end position="691"/>
    </location>
</feature>
<feature type="strand" evidence="13">
    <location>
        <begin position="694"/>
        <end position="697"/>
    </location>
</feature>
<feature type="helix" evidence="13">
    <location>
        <begin position="698"/>
        <end position="713"/>
    </location>
</feature>
<feature type="helix" evidence="13">
    <location>
        <begin position="718"/>
        <end position="721"/>
    </location>
</feature>
<feature type="strand" evidence="13">
    <location>
        <begin position="723"/>
        <end position="725"/>
    </location>
</feature>
<feature type="helix" evidence="13">
    <location>
        <begin position="726"/>
        <end position="732"/>
    </location>
</feature>
<feature type="helix" evidence="13">
    <location>
        <begin position="738"/>
        <end position="754"/>
    </location>
</feature>
<sequence>MKKEKIDLFYGALLHDIGKVIQRATGERKKHALVGADWFDEIADNQVISDQIRYHMANYQSDKLGNDHLAYITYIADNIASGVDRRQSNEESDEDASAKIWDTYTNQADIFNVFGAQTDKRYFKPTVLNLKSKPNFASATYEPFSKGDYAAIATRIKNELAEFEFNQAQIDSLLNLFEAILSFVPSSTNSKEIADISLAEHSRLTAAFALAIYDYLEDKGRHNYKEDLFTKASAFYEEEAFLLASFDLSGIQDFIYNIATSGAAKQLKARSLYLDFMSEYIADSLLDKLGLNRANLLYVGGGHAYFVLANTEKTVETLVQFEKDFNQFLLANFQTRLYVAFGWGSFAAKDIMSELNSPESYRQIYQKASRMISEKKISRYDYRTLMLLNRGGKSSERECEICHSVENLVSYHDQKVCDICRGLYQFSKEIAHDHFIITENEGLPIGPNACLKGVAFEKLSQESFSRVYVKNDYKAGTIKATHVFVGDYQCDEIHKYAALSKNEDGLGIKRLAVVRLDVDDLGAAFMAGFSRQGNGQYSTLSRSATFSRSMSLFFKVYINQFASDKKLSIIYAGGDDVFAIGSWQDIIAFTVELRQNFIKWTNGKLTLSAGIGLFADKTPISLMAHQTGELEEAAKGNEKDSISLFSSDYTFKFDRFITNVYDDKLEQIRYFFNHQDERGKNFIYKLIELLRNYESEEKMNVARLAYYLTRLEELTDKDERDKFKQFKKLFFKWYTNNESDRKEAELALLLYVYEIRKD</sequence>